<protein>
    <recommendedName>
        <fullName evidence="1">Sec-independent protein translocase protein TatA</fullName>
    </recommendedName>
</protein>
<name>TATA_CHLAA</name>
<evidence type="ECO:0000255" key="1">
    <source>
        <dbReference type="HAMAP-Rule" id="MF_00236"/>
    </source>
</evidence>
<keyword id="KW-1003">Cell membrane</keyword>
<keyword id="KW-0472">Membrane</keyword>
<keyword id="KW-0653">Protein transport</keyword>
<keyword id="KW-1185">Reference proteome</keyword>
<keyword id="KW-0811">Translocation</keyword>
<keyword id="KW-0812">Transmembrane</keyword>
<keyword id="KW-1133">Transmembrane helix</keyword>
<keyword id="KW-0813">Transport</keyword>
<sequence>MIGGLGWGELLIILIIVIAIFGAGKLAGLGGALGSSIREFRKAVKGDDEPRSDAKTEGETKV</sequence>
<dbReference type="EMBL" id="CP000909">
    <property type="protein sequence ID" value="ABY34512.1"/>
    <property type="molecule type" value="Genomic_DNA"/>
</dbReference>
<dbReference type="RefSeq" id="WP_012257168.1">
    <property type="nucleotide sequence ID" value="NC_010175.1"/>
</dbReference>
<dbReference type="RefSeq" id="YP_001634901.1">
    <property type="nucleotide sequence ID" value="NC_010175.1"/>
</dbReference>
<dbReference type="SMR" id="A9WK61"/>
<dbReference type="FunCoup" id="A9WK61">
    <property type="interactions" value="62"/>
</dbReference>
<dbReference type="STRING" id="324602.Caur_1284"/>
<dbReference type="EnsemblBacteria" id="ABY34512">
    <property type="protein sequence ID" value="ABY34512"/>
    <property type="gene ID" value="Caur_1284"/>
</dbReference>
<dbReference type="KEGG" id="cau:Caur_1284"/>
<dbReference type="PATRIC" id="fig|324602.8.peg.1473"/>
<dbReference type="eggNOG" id="COG1826">
    <property type="taxonomic scope" value="Bacteria"/>
</dbReference>
<dbReference type="HOGENOM" id="CLU_086034_6_1_0"/>
<dbReference type="InParanoid" id="A9WK61"/>
<dbReference type="Proteomes" id="UP000002008">
    <property type="component" value="Chromosome"/>
</dbReference>
<dbReference type="GO" id="GO:0033281">
    <property type="term" value="C:TAT protein transport complex"/>
    <property type="evidence" value="ECO:0007669"/>
    <property type="project" value="UniProtKB-UniRule"/>
</dbReference>
<dbReference type="GO" id="GO:0008320">
    <property type="term" value="F:protein transmembrane transporter activity"/>
    <property type="evidence" value="ECO:0007669"/>
    <property type="project" value="UniProtKB-UniRule"/>
</dbReference>
<dbReference type="GO" id="GO:0043953">
    <property type="term" value="P:protein transport by the Tat complex"/>
    <property type="evidence" value="ECO:0007669"/>
    <property type="project" value="UniProtKB-UniRule"/>
</dbReference>
<dbReference type="Gene3D" id="1.20.5.3310">
    <property type="match status" value="1"/>
</dbReference>
<dbReference type="HAMAP" id="MF_00236">
    <property type="entry name" value="TatA_E"/>
    <property type="match status" value="1"/>
</dbReference>
<dbReference type="InterPro" id="IPR003369">
    <property type="entry name" value="TatA/B/E"/>
</dbReference>
<dbReference type="InterPro" id="IPR006312">
    <property type="entry name" value="TatA/E"/>
</dbReference>
<dbReference type="NCBIfam" id="TIGR01411">
    <property type="entry name" value="tatAE"/>
    <property type="match status" value="1"/>
</dbReference>
<dbReference type="PANTHER" id="PTHR42982">
    <property type="entry name" value="SEC-INDEPENDENT PROTEIN TRANSLOCASE PROTEIN TATA"/>
    <property type="match status" value="1"/>
</dbReference>
<dbReference type="PANTHER" id="PTHR42982:SF1">
    <property type="entry name" value="SEC-INDEPENDENT PROTEIN TRANSLOCASE PROTEIN TATA"/>
    <property type="match status" value="1"/>
</dbReference>
<dbReference type="Pfam" id="PF02416">
    <property type="entry name" value="TatA_B_E"/>
    <property type="match status" value="1"/>
</dbReference>
<accession>A9WK61</accession>
<comment type="function">
    <text evidence="1">Part of the twin-arginine translocation (Tat) system that transports large folded proteins containing a characteristic twin-arginine motif in their signal peptide across membranes. TatA could form the protein-conducting channel of the Tat system.</text>
</comment>
<comment type="subunit">
    <text evidence="1">Forms a complex with TatC.</text>
</comment>
<comment type="subcellular location">
    <subcellularLocation>
        <location evidence="1">Cell membrane</location>
        <topology evidence="1">Single-pass membrane protein</topology>
    </subcellularLocation>
</comment>
<comment type="similarity">
    <text evidence="1">Belongs to the TatA/E family.</text>
</comment>
<proteinExistence type="inferred from homology"/>
<feature type="chain" id="PRO_1000078301" description="Sec-independent protein translocase protein TatA">
    <location>
        <begin position="1"/>
        <end position="62"/>
    </location>
</feature>
<feature type="transmembrane region" description="Helical" evidence="1">
    <location>
        <begin position="10"/>
        <end position="32"/>
    </location>
</feature>
<reference key="1">
    <citation type="journal article" date="2011" name="BMC Genomics">
        <title>Complete genome sequence of the filamentous anoxygenic phototrophic bacterium Chloroflexus aurantiacus.</title>
        <authorList>
            <person name="Tang K.H."/>
            <person name="Barry K."/>
            <person name="Chertkov O."/>
            <person name="Dalin E."/>
            <person name="Han C.S."/>
            <person name="Hauser L.J."/>
            <person name="Honchak B.M."/>
            <person name="Karbach L.E."/>
            <person name="Land M.L."/>
            <person name="Lapidus A."/>
            <person name="Larimer F.W."/>
            <person name="Mikhailova N."/>
            <person name="Pitluck S."/>
            <person name="Pierson B.K."/>
            <person name="Blankenship R.E."/>
        </authorList>
    </citation>
    <scope>NUCLEOTIDE SEQUENCE [LARGE SCALE GENOMIC DNA]</scope>
    <source>
        <strain>ATCC 29366 / DSM 635 / J-10-fl</strain>
    </source>
</reference>
<gene>
    <name evidence="1" type="primary">tatA</name>
    <name type="ordered locus">Caur_1284</name>
</gene>
<organism>
    <name type="scientific">Chloroflexus aurantiacus (strain ATCC 29366 / DSM 635 / J-10-fl)</name>
    <dbReference type="NCBI Taxonomy" id="324602"/>
    <lineage>
        <taxon>Bacteria</taxon>
        <taxon>Bacillati</taxon>
        <taxon>Chloroflexota</taxon>
        <taxon>Chloroflexia</taxon>
        <taxon>Chloroflexales</taxon>
        <taxon>Chloroflexineae</taxon>
        <taxon>Chloroflexaceae</taxon>
        <taxon>Chloroflexus</taxon>
    </lineage>
</organism>